<accession>Q6DYE5</accession>
<accession>Q5BQ01</accession>
<accession>Q9LNU2</accession>
<sequence length="390" mass="44074">MLKVKNFLGSRLKSFPTRKGKSDKECCRSLTSKLSVNEEYKEAFRTNSYLETRTKAEDQLGITSCSKLSSSSPSPSSSSDLSFHSHFTDYLLDPPQETLDALMQDSSLDNLIVTFFDLSSEACDVCETLLQCLQQIKINHNKIKRVMKIGKRVCNGAKTLECSPEMLCALIFQELSRFAALKNPLCRIVNEAQFRIVHDANSDLLTKLTSKKRRIRRKIRFFKFCKKLGGYSLVITHSAIVITLLIIALHSILGVFAAPALLGLCSFCLLRKKKAKGRMHKSNKDTTLEKLGTQIDIAAKGMFILINDLDTLSRLAGRLCDEIEHRKTVAAMCAKSRKIEVLKEALREFNGHEEKFSDQLQELEEHLYLCFHTINRSRRLVLAQITGQSS</sequence>
<organism>
    <name type="scientific">Arabidopsis thaliana</name>
    <name type="common">Mouse-ear cress</name>
    <dbReference type="NCBI Taxonomy" id="3702"/>
    <lineage>
        <taxon>Eukaryota</taxon>
        <taxon>Viridiplantae</taxon>
        <taxon>Streptophyta</taxon>
        <taxon>Embryophyta</taxon>
        <taxon>Tracheophyta</taxon>
        <taxon>Spermatophyta</taxon>
        <taxon>Magnoliopsida</taxon>
        <taxon>eudicotyledons</taxon>
        <taxon>Gunneridae</taxon>
        <taxon>Pentapetalae</taxon>
        <taxon>rosids</taxon>
        <taxon>malvids</taxon>
        <taxon>Brassicales</taxon>
        <taxon>Brassicaceae</taxon>
        <taxon>Camelineae</taxon>
        <taxon>Arabidopsis</taxon>
    </lineage>
</organism>
<comment type="subcellular location">
    <subcellularLocation>
        <location evidence="3">Membrane</location>
        <topology evidence="3">Multi-pass membrane protein</topology>
    </subcellularLocation>
</comment>
<comment type="alternative products">
    <event type="alternative splicing"/>
    <isoform>
        <id>Q6DYE5-1</id>
        <name>1</name>
        <sequence type="displayed"/>
    </isoform>
    <isoform>
        <id>Q6DYE5-2</id>
        <name>2</name>
        <sequence type="described" ref="VSP_028564"/>
    </isoform>
</comment>
<comment type="similarity">
    <text evidence="3">Belongs to the UPF0496 family.</text>
</comment>
<name>U496K_ARATH</name>
<keyword id="KW-0025">Alternative splicing</keyword>
<keyword id="KW-0472">Membrane</keyword>
<keyword id="KW-1185">Reference proteome</keyword>
<keyword id="KW-0812">Transmembrane</keyword>
<keyword id="KW-1133">Transmembrane helix</keyword>
<evidence type="ECO:0000255" key="1"/>
<evidence type="ECO:0000303" key="2">
    <source ref="5"/>
</evidence>
<evidence type="ECO:0000305" key="3"/>
<proteinExistence type="evidence at transcript level"/>
<dbReference type="EMBL" id="AC022472">
    <property type="protein sequence ID" value="AAF79896.1"/>
    <property type="molecule type" value="Genomic_DNA"/>
</dbReference>
<dbReference type="EMBL" id="CP002684">
    <property type="protein sequence ID" value="AEE29947.1"/>
    <property type="molecule type" value="Genomic_DNA"/>
</dbReference>
<dbReference type="EMBL" id="CP002684">
    <property type="protein sequence ID" value="AEE29948.1"/>
    <property type="molecule type" value="Genomic_DNA"/>
</dbReference>
<dbReference type="EMBL" id="DQ446265">
    <property type="protein sequence ID" value="ABE65635.1"/>
    <property type="molecule type" value="mRNA"/>
</dbReference>
<dbReference type="EMBL" id="AY630760">
    <property type="protein sequence ID" value="AAT67559.1"/>
    <property type="molecule type" value="mRNA"/>
</dbReference>
<dbReference type="EMBL" id="AY924677">
    <property type="protein sequence ID" value="AAX23752.1"/>
    <property type="molecule type" value="mRNA"/>
</dbReference>
<dbReference type="PIR" id="E86335">
    <property type="entry name" value="E86335"/>
</dbReference>
<dbReference type="RefSeq" id="NP_001077567.1">
    <molecule id="Q6DYE5-2"/>
    <property type="nucleotide sequence ID" value="NM_001084098.1"/>
</dbReference>
<dbReference type="RefSeq" id="NP_173445.2">
    <molecule id="Q6DYE5-1"/>
    <property type="nucleotide sequence ID" value="NM_101871.3"/>
</dbReference>
<dbReference type="SMR" id="Q6DYE5"/>
<dbReference type="STRING" id="3702.Q6DYE5"/>
<dbReference type="PaxDb" id="3702-AT1G20180.1"/>
<dbReference type="EnsemblPlants" id="AT1G20180.1">
    <molecule id="Q6DYE5-1"/>
    <property type="protein sequence ID" value="AT1G20180.1"/>
    <property type="gene ID" value="AT1G20180"/>
</dbReference>
<dbReference type="EnsemblPlants" id="AT1G20180.2">
    <molecule id="Q6DYE5-2"/>
    <property type="protein sequence ID" value="AT1G20180.2"/>
    <property type="gene ID" value="AT1G20180"/>
</dbReference>
<dbReference type="GeneID" id="838607"/>
<dbReference type="Gramene" id="AT1G20180.1">
    <molecule id="Q6DYE5-1"/>
    <property type="protein sequence ID" value="AT1G20180.1"/>
    <property type="gene ID" value="AT1G20180"/>
</dbReference>
<dbReference type="Gramene" id="AT1G20180.2">
    <molecule id="Q6DYE5-2"/>
    <property type="protein sequence ID" value="AT1G20180.2"/>
    <property type="gene ID" value="AT1G20180"/>
</dbReference>
<dbReference type="KEGG" id="ath:AT1G20180"/>
<dbReference type="Araport" id="AT1G20180"/>
<dbReference type="TAIR" id="AT1G20180"/>
<dbReference type="eggNOG" id="ENOG502QVA7">
    <property type="taxonomic scope" value="Eukaryota"/>
</dbReference>
<dbReference type="InParanoid" id="Q6DYE5"/>
<dbReference type="OMA" id="IAMRGHG"/>
<dbReference type="OrthoDB" id="776561at2759"/>
<dbReference type="PhylomeDB" id="Q6DYE5"/>
<dbReference type="PRO" id="PR:Q6DYE5"/>
<dbReference type="Proteomes" id="UP000006548">
    <property type="component" value="Chromosome 1"/>
</dbReference>
<dbReference type="ExpressionAtlas" id="Q6DYE5">
    <property type="expression patterns" value="baseline and differential"/>
</dbReference>
<dbReference type="GO" id="GO:0016020">
    <property type="term" value="C:membrane"/>
    <property type="evidence" value="ECO:0007669"/>
    <property type="project" value="UniProtKB-SubCell"/>
</dbReference>
<dbReference type="InterPro" id="IPR007749">
    <property type="entry name" value="DUF677"/>
</dbReference>
<dbReference type="PANTHER" id="PTHR31113:SF20">
    <property type="entry name" value="UPF0496 PROTEIN 2-RELATED"/>
    <property type="match status" value="1"/>
</dbReference>
<dbReference type="PANTHER" id="PTHR31113">
    <property type="entry name" value="UPF0496 PROTEIN 3-RELATED"/>
    <property type="match status" value="1"/>
</dbReference>
<dbReference type="Pfam" id="PF05055">
    <property type="entry name" value="DUF677"/>
    <property type="match status" value="1"/>
</dbReference>
<feature type="chain" id="PRO_0000306896" description="UPF0496 protein At1g20180">
    <location>
        <begin position="1"/>
        <end position="390"/>
    </location>
</feature>
<feature type="transmembrane region" description="Helical" evidence="1">
    <location>
        <begin position="228"/>
        <end position="248"/>
    </location>
</feature>
<feature type="transmembrane region" description="Helical" evidence="1">
    <location>
        <begin position="250"/>
        <end position="270"/>
    </location>
</feature>
<feature type="splice variant" id="VSP_028564" description="In isoform 2." evidence="2">
    <location>
        <begin position="220"/>
        <end position="250"/>
    </location>
</feature>
<feature type="sequence conflict" description="In Ref. 5; AAX23752." evidence="3" ref="5">
    <original>G</original>
    <variation>E</variation>
    <location>
        <position position="20"/>
    </location>
</feature>
<feature type="sequence conflict" description="In Ref. 4; AAT67559." evidence="3" ref="4">
    <original>M</original>
    <variation>T</variation>
    <location>
        <position position="166"/>
    </location>
</feature>
<protein>
    <recommendedName>
        <fullName>UPF0496 protein At1g20180</fullName>
    </recommendedName>
</protein>
<gene>
    <name type="ordered locus">At1g20180</name>
    <name type="ORF">T20H2.5</name>
</gene>
<reference key="1">
    <citation type="journal article" date="2000" name="Nature">
        <title>Sequence and analysis of chromosome 1 of the plant Arabidopsis thaliana.</title>
        <authorList>
            <person name="Theologis A."/>
            <person name="Ecker J.R."/>
            <person name="Palm C.J."/>
            <person name="Federspiel N.A."/>
            <person name="Kaul S."/>
            <person name="White O."/>
            <person name="Alonso J."/>
            <person name="Altafi H."/>
            <person name="Araujo R."/>
            <person name="Bowman C.L."/>
            <person name="Brooks S.Y."/>
            <person name="Buehler E."/>
            <person name="Chan A."/>
            <person name="Chao Q."/>
            <person name="Chen H."/>
            <person name="Cheuk R.F."/>
            <person name="Chin C.W."/>
            <person name="Chung M.K."/>
            <person name="Conn L."/>
            <person name="Conway A.B."/>
            <person name="Conway A.R."/>
            <person name="Creasy T.H."/>
            <person name="Dewar K."/>
            <person name="Dunn P."/>
            <person name="Etgu P."/>
            <person name="Feldblyum T.V."/>
            <person name="Feng J.-D."/>
            <person name="Fong B."/>
            <person name="Fujii C.Y."/>
            <person name="Gill J.E."/>
            <person name="Goldsmith A.D."/>
            <person name="Haas B."/>
            <person name="Hansen N.F."/>
            <person name="Hughes B."/>
            <person name="Huizar L."/>
            <person name="Hunter J.L."/>
            <person name="Jenkins J."/>
            <person name="Johnson-Hopson C."/>
            <person name="Khan S."/>
            <person name="Khaykin E."/>
            <person name="Kim C.J."/>
            <person name="Koo H.L."/>
            <person name="Kremenetskaia I."/>
            <person name="Kurtz D.B."/>
            <person name="Kwan A."/>
            <person name="Lam B."/>
            <person name="Langin-Hooper S."/>
            <person name="Lee A."/>
            <person name="Lee J.M."/>
            <person name="Lenz C.A."/>
            <person name="Li J.H."/>
            <person name="Li Y.-P."/>
            <person name="Lin X."/>
            <person name="Liu S.X."/>
            <person name="Liu Z.A."/>
            <person name="Luros J.S."/>
            <person name="Maiti R."/>
            <person name="Marziali A."/>
            <person name="Militscher J."/>
            <person name="Miranda M."/>
            <person name="Nguyen M."/>
            <person name="Nierman W.C."/>
            <person name="Osborne B.I."/>
            <person name="Pai G."/>
            <person name="Peterson J."/>
            <person name="Pham P.K."/>
            <person name="Rizzo M."/>
            <person name="Rooney T."/>
            <person name="Rowley D."/>
            <person name="Sakano H."/>
            <person name="Salzberg S.L."/>
            <person name="Schwartz J.R."/>
            <person name="Shinn P."/>
            <person name="Southwick A.M."/>
            <person name="Sun H."/>
            <person name="Tallon L.J."/>
            <person name="Tambunga G."/>
            <person name="Toriumi M.J."/>
            <person name="Town C.D."/>
            <person name="Utterback T."/>
            <person name="Van Aken S."/>
            <person name="Vaysberg M."/>
            <person name="Vysotskaia V.S."/>
            <person name="Walker M."/>
            <person name="Wu D."/>
            <person name="Yu G."/>
            <person name="Fraser C.M."/>
            <person name="Venter J.C."/>
            <person name="Davis R.W."/>
        </authorList>
    </citation>
    <scope>NUCLEOTIDE SEQUENCE [LARGE SCALE GENOMIC DNA]</scope>
    <source>
        <strain>cv. Columbia</strain>
    </source>
</reference>
<reference key="2">
    <citation type="journal article" date="2017" name="Plant J.">
        <title>Araport11: a complete reannotation of the Arabidopsis thaliana reference genome.</title>
        <authorList>
            <person name="Cheng C.Y."/>
            <person name="Krishnakumar V."/>
            <person name="Chan A.P."/>
            <person name="Thibaud-Nissen F."/>
            <person name="Schobel S."/>
            <person name="Town C.D."/>
        </authorList>
    </citation>
    <scope>GENOME REANNOTATION</scope>
    <source>
        <strain>cv. Columbia</strain>
    </source>
</reference>
<reference key="3">
    <citation type="journal article" date="2006" name="Plant Biotechnol. J.">
        <title>Simultaneous high-throughput recombinational cloning of open reading frames in closed and open configurations.</title>
        <authorList>
            <person name="Underwood B.A."/>
            <person name="Vanderhaeghen R."/>
            <person name="Whitford R."/>
            <person name="Town C.D."/>
            <person name="Hilson P."/>
        </authorList>
    </citation>
    <scope>NUCLEOTIDE SEQUENCE [LARGE SCALE MRNA] (ISOFORM 1)</scope>
    <source>
        <strain>cv. Columbia</strain>
    </source>
</reference>
<reference key="4">
    <citation type="submission" date="2004-05" db="EMBL/GenBank/DDBJ databases">
        <title>Reconstruction of cDNA sequences for hypothetical genes in Arabidopsis thaliana from 5' and 3' RACE products.</title>
        <authorList>
            <person name="Xiao Y.-L."/>
            <person name="Underwood B.A."/>
            <person name="Moskal W.A. Jr."/>
            <person name="Torian U."/>
            <person name="Redman J.C."/>
            <person name="Wu H.C."/>
            <person name="Utterback T."/>
            <person name="Town C.D."/>
        </authorList>
    </citation>
    <scope>NUCLEOTIDE SEQUENCE [LARGE SCALE MRNA] (ISOFORM 1)</scope>
    <source>
        <strain>cv. Columbia</strain>
    </source>
</reference>
<reference key="5">
    <citation type="submission" date="2005-02" db="EMBL/GenBank/DDBJ databases">
        <authorList>
            <person name="Underwood B.A."/>
            <person name="Xiao Y.-L."/>
            <person name="Moskal W.A. Jr."/>
            <person name="Monaghan E.L."/>
            <person name="Wang W."/>
            <person name="Redman J.C."/>
            <person name="Wu H.C."/>
            <person name="Utterback T."/>
            <person name="Town C.D."/>
        </authorList>
    </citation>
    <scope>NUCLEOTIDE SEQUENCE [LARGE SCALE MRNA] (ISOFORM 2)</scope>
    <source>
        <strain>cv. Columbia</strain>
    </source>
</reference>